<proteinExistence type="inferred from homology"/>
<dbReference type="EC" id="2.4.2.18" evidence="1"/>
<dbReference type="EMBL" id="AE017340">
    <property type="protein sequence ID" value="AAV82586.1"/>
    <property type="molecule type" value="Genomic_DNA"/>
</dbReference>
<dbReference type="RefSeq" id="WP_011234989.1">
    <property type="nucleotide sequence ID" value="NC_006512.1"/>
</dbReference>
<dbReference type="SMR" id="Q5QX82"/>
<dbReference type="STRING" id="283942.IL1753"/>
<dbReference type="GeneID" id="41336930"/>
<dbReference type="KEGG" id="ilo:IL1753"/>
<dbReference type="eggNOG" id="COG0547">
    <property type="taxonomic scope" value="Bacteria"/>
</dbReference>
<dbReference type="HOGENOM" id="CLU_034315_2_1_6"/>
<dbReference type="OrthoDB" id="9806430at2"/>
<dbReference type="UniPathway" id="UPA00035">
    <property type="reaction ID" value="UER00041"/>
</dbReference>
<dbReference type="Proteomes" id="UP000001171">
    <property type="component" value="Chromosome"/>
</dbReference>
<dbReference type="GO" id="GO:0005829">
    <property type="term" value="C:cytosol"/>
    <property type="evidence" value="ECO:0007669"/>
    <property type="project" value="TreeGrafter"/>
</dbReference>
<dbReference type="GO" id="GO:0004048">
    <property type="term" value="F:anthranilate phosphoribosyltransferase activity"/>
    <property type="evidence" value="ECO:0007669"/>
    <property type="project" value="UniProtKB-UniRule"/>
</dbReference>
<dbReference type="GO" id="GO:0000287">
    <property type="term" value="F:magnesium ion binding"/>
    <property type="evidence" value="ECO:0007669"/>
    <property type="project" value="UniProtKB-UniRule"/>
</dbReference>
<dbReference type="GO" id="GO:0000162">
    <property type="term" value="P:L-tryptophan biosynthetic process"/>
    <property type="evidence" value="ECO:0007669"/>
    <property type="project" value="UniProtKB-UniRule"/>
</dbReference>
<dbReference type="FunFam" id="3.40.1030.10:FF:000002">
    <property type="entry name" value="Anthranilate phosphoribosyltransferase"/>
    <property type="match status" value="1"/>
</dbReference>
<dbReference type="Gene3D" id="3.40.1030.10">
    <property type="entry name" value="Nucleoside phosphorylase/phosphoribosyltransferase catalytic domain"/>
    <property type="match status" value="1"/>
</dbReference>
<dbReference type="Gene3D" id="1.20.970.10">
    <property type="entry name" value="Transferase, Pyrimidine Nucleoside Phosphorylase, Chain C"/>
    <property type="match status" value="1"/>
</dbReference>
<dbReference type="HAMAP" id="MF_00211">
    <property type="entry name" value="TrpD"/>
    <property type="match status" value="1"/>
</dbReference>
<dbReference type="InterPro" id="IPR005940">
    <property type="entry name" value="Anthranilate_Pribosyl_Tfrase"/>
</dbReference>
<dbReference type="InterPro" id="IPR000312">
    <property type="entry name" value="Glycosyl_Trfase_fam3"/>
</dbReference>
<dbReference type="InterPro" id="IPR017459">
    <property type="entry name" value="Glycosyl_Trfase_fam3_N_dom"/>
</dbReference>
<dbReference type="InterPro" id="IPR036320">
    <property type="entry name" value="Glycosyl_Trfase_fam3_N_dom_sf"/>
</dbReference>
<dbReference type="InterPro" id="IPR035902">
    <property type="entry name" value="Nuc_phospho_transferase"/>
</dbReference>
<dbReference type="NCBIfam" id="TIGR01245">
    <property type="entry name" value="trpD"/>
    <property type="match status" value="1"/>
</dbReference>
<dbReference type="PANTHER" id="PTHR43285">
    <property type="entry name" value="ANTHRANILATE PHOSPHORIBOSYLTRANSFERASE"/>
    <property type="match status" value="1"/>
</dbReference>
<dbReference type="PANTHER" id="PTHR43285:SF2">
    <property type="entry name" value="ANTHRANILATE PHOSPHORIBOSYLTRANSFERASE"/>
    <property type="match status" value="1"/>
</dbReference>
<dbReference type="Pfam" id="PF02885">
    <property type="entry name" value="Glycos_trans_3N"/>
    <property type="match status" value="1"/>
</dbReference>
<dbReference type="Pfam" id="PF00591">
    <property type="entry name" value="Glycos_transf_3"/>
    <property type="match status" value="1"/>
</dbReference>
<dbReference type="SUPFAM" id="SSF52418">
    <property type="entry name" value="Nucleoside phosphorylase/phosphoribosyltransferase catalytic domain"/>
    <property type="match status" value="1"/>
</dbReference>
<dbReference type="SUPFAM" id="SSF47648">
    <property type="entry name" value="Nucleoside phosphorylase/phosphoribosyltransferase N-terminal domain"/>
    <property type="match status" value="1"/>
</dbReference>
<evidence type="ECO:0000255" key="1">
    <source>
        <dbReference type="HAMAP-Rule" id="MF_00211"/>
    </source>
</evidence>
<gene>
    <name evidence="1" type="primary">trpD</name>
    <name type="ordered locus">IL1753</name>
</gene>
<protein>
    <recommendedName>
        <fullName evidence="1">Anthranilate phosphoribosyltransferase</fullName>
        <ecNumber evidence="1">2.4.2.18</ecNumber>
    </recommendedName>
</protein>
<comment type="function">
    <text evidence="1">Catalyzes the transfer of the phosphoribosyl group of 5-phosphorylribose-1-pyrophosphate (PRPP) to anthranilate to yield N-(5'-phosphoribosyl)-anthranilate (PRA).</text>
</comment>
<comment type="catalytic activity">
    <reaction evidence="1">
        <text>N-(5-phospho-beta-D-ribosyl)anthranilate + diphosphate = 5-phospho-alpha-D-ribose 1-diphosphate + anthranilate</text>
        <dbReference type="Rhea" id="RHEA:11768"/>
        <dbReference type="ChEBI" id="CHEBI:16567"/>
        <dbReference type="ChEBI" id="CHEBI:18277"/>
        <dbReference type="ChEBI" id="CHEBI:33019"/>
        <dbReference type="ChEBI" id="CHEBI:58017"/>
        <dbReference type="EC" id="2.4.2.18"/>
    </reaction>
</comment>
<comment type="cofactor">
    <cofactor evidence="1">
        <name>Mg(2+)</name>
        <dbReference type="ChEBI" id="CHEBI:18420"/>
    </cofactor>
    <text evidence="1">Binds 2 magnesium ions per monomer.</text>
</comment>
<comment type="pathway">
    <text evidence="1">Amino-acid biosynthesis; L-tryptophan biosynthesis; L-tryptophan from chorismate: step 2/5.</text>
</comment>
<comment type="subunit">
    <text evidence="1">Homodimer.</text>
</comment>
<comment type="similarity">
    <text evidence="1">Belongs to the anthranilate phosphoribosyltransferase family.</text>
</comment>
<keyword id="KW-0028">Amino-acid biosynthesis</keyword>
<keyword id="KW-0057">Aromatic amino acid biosynthesis</keyword>
<keyword id="KW-0328">Glycosyltransferase</keyword>
<keyword id="KW-0460">Magnesium</keyword>
<keyword id="KW-0479">Metal-binding</keyword>
<keyword id="KW-1185">Reference proteome</keyword>
<keyword id="KW-0808">Transferase</keyword>
<keyword id="KW-0822">Tryptophan biosynthesis</keyword>
<sequence length="337" mass="36115">MKALQTLMSGESLTQDQTREFFQRLIKGELNDIQVSAALIAMKMRGETPAELAGAAEAILSAAKPFLRSDTTVIDSCGTGGDGSNTINISTTAALVAASMGLAVAKHGNRSVSSRSGSADVLEALKLRVNLDPSDASTQLADNGFCFLFAPHYHPGIKHAMPVRQTLKTRTLFNLIGPLVNPARPDAQLLGVYSEEWVRPMAETLQRLGVKRAMVVHGSGLDELALHGPTRVIELRNGELNDYHVTPNDFGVPSAPLDELKGGDADFNARILEDILAGGGSPAQRHSVAMNVAALLYLSGQYNDMKAATAATMEHLDTGQPLLHLRRVQDAQETYHV</sequence>
<organism>
    <name type="scientific">Idiomarina loihiensis (strain ATCC BAA-735 / DSM 15497 / L2-TR)</name>
    <dbReference type="NCBI Taxonomy" id="283942"/>
    <lineage>
        <taxon>Bacteria</taxon>
        <taxon>Pseudomonadati</taxon>
        <taxon>Pseudomonadota</taxon>
        <taxon>Gammaproteobacteria</taxon>
        <taxon>Alteromonadales</taxon>
        <taxon>Idiomarinaceae</taxon>
        <taxon>Idiomarina</taxon>
    </lineage>
</organism>
<accession>Q5QX82</accession>
<name>TRPD_IDILO</name>
<reference key="1">
    <citation type="journal article" date="2004" name="Proc. Natl. Acad. Sci. U.S.A.">
        <title>Genome sequence of the deep-sea gamma-proteobacterium Idiomarina loihiensis reveals amino acid fermentation as a source of carbon and energy.</title>
        <authorList>
            <person name="Hou S."/>
            <person name="Saw J.H."/>
            <person name="Lee K.S."/>
            <person name="Freitas T.A."/>
            <person name="Belisle C."/>
            <person name="Kawarabayasi Y."/>
            <person name="Donachie S.P."/>
            <person name="Pikina A."/>
            <person name="Galperin M.Y."/>
            <person name="Koonin E.V."/>
            <person name="Makarova K.S."/>
            <person name="Omelchenko M.V."/>
            <person name="Sorokin A."/>
            <person name="Wolf Y.I."/>
            <person name="Li Q.X."/>
            <person name="Keum Y.S."/>
            <person name="Campbell S."/>
            <person name="Denery J."/>
            <person name="Aizawa S."/>
            <person name="Shibata S."/>
            <person name="Malahoff A."/>
            <person name="Alam M."/>
        </authorList>
    </citation>
    <scope>NUCLEOTIDE SEQUENCE [LARGE SCALE GENOMIC DNA]</scope>
    <source>
        <strain>ATCC BAA-735 / DSM 15497 / L2-TR</strain>
    </source>
</reference>
<feature type="chain" id="PRO_0000227163" description="Anthranilate phosphoribosyltransferase">
    <location>
        <begin position="1"/>
        <end position="337"/>
    </location>
</feature>
<feature type="binding site" evidence="1">
    <location>
        <position position="78"/>
    </location>
    <ligand>
        <name>5-phospho-alpha-D-ribose 1-diphosphate</name>
        <dbReference type="ChEBI" id="CHEBI:58017"/>
    </ligand>
</feature>
<feature type="binding site" evidence="1">
    <location>
        <position position="78"/>
    </location>
    <ligand>
        <name>anthranilate</name>
        <dbReference type="ChEBI" id="CHEBI:16567"/>
        <label>1</label>
    </ligand>
</feature>
<feature type="binding site" evidence="1">
    <location>
        <begin position="81"/>
        <end position="82"/>
    </location>
    <ligand>
        <name>5-phospho-alpha-D-ribose 1-diphosphate</name>
        <dbReference type="ChEBI" id="CHEBI:58017"/>
    </ligand>
</feature>
<feature type="binding site" evidence="1">
    <location>
        <position position="86"/>
    </location>
    <ligand>
        <name>5-phospho-alpha-D-ribose 1-diphosphate</name>
        <dbReference type="ChEBI" id="CHEBI:58017"/>
    </ligand>
</feature>
<feature type="binding site" evidence="1">
    <location>
        <begin position="88"/>
        <end position="91"/>
    </location>
    <ligand>
        <name>5-phospho-alpha-D-ribose 1-diphosphate</name>
        <dbReference type="ChEBI" id="CHEBI:58017"/>
    </ligand>
</feature>
<feature type="binding site" evidence="1">
    <location>
        <position position="90"/>
    </location>
    <ligand>
        <name>Mg(2+)</name>
        <dbReference type="ChEBI" id="CHEBI:18420"/>
        <label>1</label>
    </ligand>
</feature>
<feature type="binding site" evidence="1">
    <location>
        <begin position="106"/>
        <end position="114"/>
    </location>
    <ligand>
        <name>5-phospho-alpha-D-ribose 1-diphosphate</name>
        <dbReference type="ChEBI" id="CHEBI:58017"/>
    </ligand>
</feature>
<feature type="binding site" evidence="1">
    <location>
        <position position="109"/>
    </location>
    <ligand>
        <name>anthranilate</name>
        <dbReference type="ChEBI" id="CHEBI:16567"/>
        <label>1</label>
    </ligand>
</feature>
<feature type="binding site" evidence="1">
    <location>
        <position position="118"/>
    </location>
    <ligand>
        <name>5-phospho-alpha-D-ribose 1-diphosphate</name>
        <dbReference type="ChEBI" id="CHEBI:58017"/>
    </ligand>
</feature>
<feature type="binding site" evidence="1">
    <location>
        <position position="164"/>
    </location>
    <ligand>
        <name>anthranilate</name>
        <dbReference type="ChEBI" id="CHEBI:16567"/>
        <label>2</label>
    </ligand>
</feature>
<feature type="binding site" evidence="1">
    <location>
        <position position="222"/>
    </location>
    <ligand>
        <name>Mg(2+)</name>
        <dbReference type="ChEBI" id="CHEBI:18420"/>
        <label>2</label>
    </ligand>
</feature>
<feature type="binding site" evidence="1">
    <location>
        <position position="223"/>
    </location>
    <ligand>
        <name>Mg(2+)</name>
        <dbReference type="ChEBI" id="CHEBI:18420"/>
        <label>1</label>
    </ligand>
</feature>
<feature type="binding site" evidence="1">
    <location>
        <position position="223"/>
    </location>
    <ligand>
        <name>Mg(2+)</name>
        <dbReference type="ChEBI" id="CHEBI:18420"/>
        <label>2</label>
    </ligand>
</feature>